<gene>
    <name evidence="1" type="primary">fabH</name>
    <name type="ordered locus">mma_1356</name>
</gene>
<protein>
    <recommendedName>
        <fullName evidence="1">Beta-ketoacyl-[acyl-carrier-protein] synthase III</fullName>
        <shortName evidence="1">Beta-ketoacyl-ACP synthase III</shortName>
        <shortName evidence="1">KAS III</shortName>
        <ecNumber evidence="1">2.3.1.180</ecNumber>
    </recommendedName>
    <alternativeName>
        <fullName evidence="1">3-oxoacyl-[acyl-carrier-protein] synthase 3</fullName>
    </alternativeName>
    <alternativeName>
        <fullName evidence="1">3-oxoacyl-[acyl-carrier-protein] synthase III</fullName>
    </alternativeName>
</protein>
<proteinExistence type="inferred from homology"/>
<feature type="chain" id="PRO_1000070233" description="Beta-ketoacyl-[acyl-carrier-protein] synthase III">
    <location>
        <begin position="1"/>
        <end position="328"/>
    </location>
</feature>
<feature type="region of interest" description="ACP-binding" evidence="1">
    <location>
        <begin position="256"/>
        <end position="260"/>
    </location>
</feature>
<feature type="active site" evidence="1">
    <location>
        <position position="122"/>
    </location>
</feature>
<feature type="active site" evidence="1">
    <location>
        <position position="255"/>
    </location>
</feature>
<feature type="active site" evidence="1">
    <location>
        <position position="285"/>
    </location>
</feature>
<organism>
    <name type="scientific">Janthinobacterium sp. (strain Marseille)</name>
    <name type="common">Minibacterium massiliensis</name>
    <dbReference type="NCBI Taxonomy" id="375286"/>
    <lineage>
        <taxon>Bacteria</taxon>
        <taxon>Pseudomonadati</taxon>
        <taxon>Pseudomonadota</taxon>
        <taxon>Betaproteobacteria</taxon>
        <taxon>Burkholderiales</taxon>
        <taxon>Oxalobacteraceae</taxon>
        <taxon>Janthinobacterium</taxon>
    </lineage>
</organism>
<reference key="1">
    <citation type="journal article" date="2007" name="PLoS Genet.">
        <title>Genome analysis of Minibacterium massiliensis highlights the convergent evolution of water-living bacteria.</title>
        <authorList>
            <person name="Audic S."/>
            <person name="Robert C."/>
            <person name="Campagna B."/>
            <person name="Parinello H."/>
            <person name="Claverie J.-M."/>
            <person name="Raoult D."/>
            <person name="Drancourt M."/>
        </authorList>
    </citation>
    <scope>NUCLEOTIDE SEQUENCE [LARGE SCALE GENOMIC DNA]</scope>
    <source>
        <strain>Marseille</strain>
    </source>
</reference>
<comment type="function">
    <text evidence="1">Catalyzes the condensation reaction of fatty acid synthesis by the addition to an acyl acceptor of two carbons from malonyl-ACP. Catalyzes the first condensation reaction which initiates fatty acid synthesis and may therefore play a role in governing the total rate of fatty acid production. Possesses both acetoacetyl-ACP synthase and acetyl transacylase activities. Its substrate specificity determines the biosynthesis of branched-chain and/or straight-chain of fatty acids.</text>
</comment>
<comment type="catalytic activity">
    <reaction evidence="1">
        <text>malonyl-[ACP] + acetyl-CoA + H(+) = 3-oxobutanoyl-[ACP] + CO2 + CoA</text>
        <dbReference type="Rhea" id="RHEA:12080"/>
        <dbReference type="Rhea" id="RHEA-COMP:9623"/>
        <dbReference type="Rhea" id="RHEA-COMP:9625"/>
        <dbReference type="ChEBI" id="CHEBI:15378"/>
        <dbReference type="ChEBI" id="CHEBI:16526"/>
        <dbReference type="ChEBI" id="CHEBI:57287"/>
        <dbReference type="ChEBI" id="CHEBI:57288"/>
        <dbReference type="ChEBI" id="CHEBI:78449"/>
        <dbReference type="ChEBI" id="CHEBI:78450"/>
        <dbReference type="EC" id="2.3.1.180"/>
    </reaction>
</comment>
<comment type="pathway">
    <text evidence="1">Lipid metabolism; fatty acid biosynthesis.</text>
</comment>
<comment type="subunit">
    <text evidence="1">Homodimer.</text>
</comment>
<comment type="subcellular location">
    <subcellularLocation>
        <location evidence="1">Cytoplasm</location>
    </subcellularLocation>
</comment>
<comment type="domain">
    <text evidence="1">The last Arg residue of the ACP-binding site is essential for the weak association between ACP/AcpP and FabH.</text>
</comment>
<comment type="similarity">
    <text evidence="1">Belongs to the thiolase-like superfamily. FabH family.</text>
</comment>
<keyword id="KW-0012">Acyltransferase</keyword>
<keyword id="KW-0963">Cytoplasm</keyword>
<keyword id="KW-0275">Fatty acid biosynthesis</keyword>
<keyword id="KW-0276">Fatty acid metabolism</keyword>
<keyword id="KW-0444">Lipid biosynthesis</keyword>
<keyword id="KW-0443">Lipid metabolism</keyword>
<keyword id="KW-0511">Multifunctional enzyme</keyword>
<keyword id="KW-0808">Transferase</keyword>
<accession>A6SXP9</accession>
<name>FABH_JANMA</name>
<evidence type="ECO:0000255" key="1">
    <source>
        <dbReference type="HAMAP-Rule" id="MF_01815"/>
    </source>
</evidence>
<dbReference type="EC" id="2.3.1.180" evidence="1"/>
<dbReference type="EMBL" id="CP000269">
    <property type="protein sequence ID" value="ABR88510.1"/>
    <property type="molecule type" value="Genomic_DNA"/>
</dbReference>
<dbReference type="RefSeq" id="WP_012079213.1">
    <property type="nucleotide sequence ID" value="NC_009659.1"/>
</dbReference>
<dbReference type="SMR" id="A6SXP9"/>
<dbReference type="STRING" id="375286.mma_1356"/>
<dbReference type="KEGG" id="mms:mma_1356"/>
<dbReference type="eggNOG" id="COG0332">
    <property type="taxonomic scope" value="Bacteria"/>
</dbReference>
<dbReference type="HOGENOM" id="CLU_039592_3_1_4"/>
<dbReference type="OrthoDB" id="9815506at2"/>
<dbReference type="UniPathway" id="UPA00094"/>
<dbReference type="Proteomes" id="UP000006388">
    <property type="component" value="Chromosome"/>
</dbReference>
<dbReference type="GO" id="GO:0005737">
    <property type="term" value="C:cytoplasm"/>
    <property type="evidence" value="ECO:0007669"/>
    <property type="project" value="UniProtKB-SubCell"/>
</dbReference>
<dbReference type="GO" id="GO:0004315">
    <property type="term" value="F:3-oxoacyl-[acyl-carrier-protein] synthase activity"/>
    <property type="evidence" value="ECO:0007669"/>
    <property type="project" value="InterPro"/>
</dbReference>
<dbReference type="GO" id="GO:0033818">
    <property type="term" value="F:beta-ketoacyl-acyl-carrier-protein synthase III activity"/>
    <property type="evidence" value="ECO:0007669"/>
    <property type="project" value="UniProtKB-UniRule"/>
</dbReference>
<dbReference type="GO" id="GO:0006633">
    <property type="term" value="P:fatty acid biosynthetic process"/>
    <property type="evidence" value="ECO:0007669"/>
    <property type="project" value="UniProtKB-UniRule"/>
</dbReference>
<dbReference type="CDD" id="cd00830">
    <property type="entry name" value="KAS_III"/>
    <property type="match status" value="1"/>
</dbReference>
<dbReference type="FunFam" id="3.40.47.10:FF:000004">
    <property type="entry name" value="3-oxoacyl-[acyl-carrier-protein] synthase 3"/>
    <property type="match status" value="1"/>
</dbReference>
<dbReference type="Gene3D" id="3.40.47.10">
    <property type="match status" value="1"/>
</dbReference>
<dbReference type="HAMAP" id="MF_01815">
    <property type="entry name" value="FabH"/>
    <property type="match status" value="1"/>
</dbReference>
<dbReference type="InterPro" id="IPR013747">
    <property type="entry name" value="ACP_syn_III_C"/>
</dbReference>
<dbReference type="InterPro" id="IPR013751">
    <property type="entry name" value="ACP_syn_III_N"/>
</dbReference>
<dbReference type="InterPro" id="IPR004655">
    <property type="entry name" value="FabH"/>
</dbReference>
<dbReference type="InterPro" id="IPR016039">
    <property type="entry name" value="Thiolase-like"/>
</dbReference>
<dbReference type="NCBIfam" id="TIGR00747">
    <property type="entry name" value="fabH"/>
    <property type="match status" value="1"/>
</dbReference>
<dbReference type="NCBIfam" id="NF006829">
    <property type="entry name" value="PRK09352.1"/>
    <property type="match status" value="1"/>
</dbReference>
<dbReference type="PANTHER" id="PTHR43091">
    <property type="entry name" value="3-OXOACYL-[ACYL-CARRIER-PROTEIN] SYNTHASE"/>
    <property type="match status" value="1"/>
</dbReference>
<dbReference type="PANTHER" id="PTHR43091:SF1">
    <property type="entry name" value="BETA-KETOACYL-[ACYL-CARRIER-PROTEIN] SYNTHASE III, CHLOROPLASTIC"/>
    <property type="match status" value="1"/>
</dbReference>
<dbReference type="Pfam" id="PF08545">
    <property type="entry name" value="ACP_syn_III"/>
    <property type="match status" value="1"/>
</dbReference>
<dbReference type="Pfam" id="PF08541">
    <property type="entry name" value="ACP_syn_III_C"/>
    <property type="match status" value="1"/>
</dbReference>
<dbReference type="SUPFAM" id="SSF53901">
    <property type="entry name" value="Thiolase-like"/>
    <property type="match status" value="1"/>
</dbReference>
<sequence>MTIYSKIIGTGSYLPPNRVTNQELTAQLASNGIETSDEWIVSRSGISARHYADAGVQSSDLAVEAAKRALEMAKLGVDDVDLIILATSTPDFFGGFPSTACVVQRKLGITNDCAAVDVQAVCSGFVYAVSIADNFIKAGTHKNVLVIGAEVFSRIIDFEDRTTCVLFGDGAGAVLMTASQEPGVLATKLHANGNYGDILCLPGKVSKGVVEGSAFLYMDGPAVFKLAVSVLDKVAHEALEIAGMQSSEVDWIIPHQANIRIMQSTAKKLGLGMDKMIVTVDQHGNTSAASIPMALDVGVRDGRIKPGQNVMMEGVGGGFTWGAVLARM</sequence>